<reference evidence="4" key="1">
    <citation type="journal article" date="2010" name="J. Bacteriol.">
        <title>The Citrobacter rodentium genome sequence reveals convergent evolution with human pathogenic Escherichia coli.</title>
        <authorList>
            <person name="Petty N.K."/>
            <person name="Bulgin R."/>
            <person name="Crepin V.F."/>
            <person name="Cerdeno-Tarraga A.M."/>
            <person name="Schroeder G.N."/>
            <person name="Quail M.A."/>
            <person name="Lennard N."/>
            <person name="Corton C."/>
            <person name="Barron A."/>
            <person name="Clark L."/>
            <person name="Toribio A.L."/>
            <person name="Parkhill J."/>
            <person name="Dougan G."/>
            <person name="Frankel G."/>
            <person name="Thomson N.R."/>
        </authorList>
    </citation>
    <scope>NUCLEOTIDE SEQUENCE [LARGE SCALE GENOMIC DNA]</scope>
    <source>
        <strain evidence="3">ICC168</strain>
    </source>
</reference>
<name>APHA_CITRI</name>
<protein>
    <recommendedName>
        <fullName evidence="1 4">Class B acid phosphatase</fullName>
        <shortName evidence="1">CBAP</shortName>
        <ecNumber evidence="1 4">3.1.3.2</ecNumber>
    </recommendedName>
</protein>
<organism>
    <name type="scientific">Citrobacter rodentium (strain ICC168)</name>
    <name type="common">Citrobacter freundii biotype 4280</name>
    <dbReference type="NCBI Taxonomy" id="637910"/>
    <lineage>
        <taxon>Bacteria</taxon>
        <taxon>Pseudomonadati</taxon>
        <taxon>Pseudomonadota</taxon>
        <taxon>Gammaproteobacteria</taxon>
        <taxon>Enterobacterales</taxon>
        <taxon>Enterobacteriaceae</taxon>
        <taxon>Citrobacter</taxon>
    </lineage>
</organism>
<comment type="function">
    <text evidence="1">Dephosphorylates several organic phosphate monoesters. Also has a phosphotransferase activity catalyzing the transfer of low-energy phosphate groups from organic phosphate monoesters to free hydroxyl groups of various organic compounds (By similarity).</text>
</comment>
<comment type="catalytic activity">
    <reaction evidence="1">
        <text>a phosphate monoester + H2O = an alcohol + phosphate</text>
        <dbReference type="Rhea" id="RHEA:15017"/>
        <dbReference type="ChEBI" id="CHEBI:15377"/>
        <dbReference type="ChEBI" id="CHEBI:30879"/>
        <dbReference type="ChEBI" id="CHEBI:43474"/>
        <dbReference type="ChEBI" id="CHEBI:67140"/>
        <dbReference type="EC" id="3.1.3.2"/>
    </reaction>
</comment>
<comment type="cofactor">
    <cofactor evidence="1">
        <name>Mg(2+)</name>
        <dbReference type="ChEBI" id="CHEBI:18420"/>
    </cofactor>
    <text evidence="1">Binds 1 Mg(2+) ion per subunit.</text>
</comment>
<comment type="subunit">
    <text evidence="1">Homotetramer.</text>
</comment>
<comment type="subcellular location">
    <subcellularLocation>
        <location evidence="1">Periplasm</location>
    </subcellularLocation>
</comment>
<comment type="similarity">
    <text evidence="1">Belongs to the class B bacterial acid phosphatase family.</text>
</comment>
<feature type="signal peptide" evidence="2 4">
    <location>
        <begin position="1"/>
        <end position="25"/>
    </location>
</feature>
<feature type="chain" id="PRO_5000566034" description="Class B acid phosphatase" evidence="2">
    <location>
        <begin position="26"/>
        <end position="237"/>
    </location>
</feature>
<feature type="active site" description="Nucleophile" evidence="1">
    <location>
        <position position="69"/>
    </location>
</feature>
<feature type="active site" description="Proton donor" evidence="1">
    <location>
        <position position="71"/>
    </location>
</feature>
<feature type="binding site" evidence="1">
    <location>
        <position position="69"/>
    </location>
    <ligand>
        <name>Mg(2+)</name>
        <dbReference type="ChEBI" id="CHEBI:18420"/>
    </ligand>
</feature>
<feature type="binding site" evidence="1">
    <location>
        <position position="71"/>
    </location>
    <ligand>
        <name>Mg(2+)</name>
        <dbReference type="ChEBI" id="CHEBI:18420"/>
    </ligand>
</feature>
<feature type="binding site" evidence="1">
    <location>
        <begin position="137"/>
        <end position="138"/>
    </location>
    <ligand>
        <name>substrate</name>
    </ligand>
</feature>
<feature type="binding site" evidence="1">
    <location>
        <position position="177"/>
    </location>
    <ligand>
        <name>substrate</name>
    </ligand>
</feature>
<feature type="binding site" evidence="1">
    <location>
        <position position="192"/>
    </location>
    <ligand>
        <name>Mg(2+)</name>
        <dbReference type="ChEBI" id="CHEBI:18420"/>
    </ligand>
</feature>
<keyword id="KW-0378">Hydrolase</keyword>
<keyword id="KW-0460">Magnesium</keyword>
<keyword id="KW-0479">Metal-binding</keyword>
<keyword id="KW-0574">Periplasm</keyword>
<keyword id="KW-1185">Reference proteome</keyword>
<keyword id="KW-0732">Signal</keyword>
<proteinExistence type="inferred from homology"/>
<sequence>MRKVSLALSAACLLFTLNYTASALASSPSPLNPGTNVAKLAEQAPVHWVSVAQIEKSLTGRPPMAVGFDIDDTVLFSSPGFWRGKKMYSPDSEEYLKNPAFWEKMNNGWDEFSIPKEVARQLIALHLRRGDSIFFVTGRSQTSNERVSKTLADDFLIPATVMNPVIFAGDKPGQNSKIQWLQAKNIRIFYGDSDNDIAAARELGIRGIRILRASNSTYKPLPQAGAFGEEVIVNSEY</sequence>
<dbReference type="EC" id="3.1.3.2" evidence="1 4"/>
<dbReference type="EMBL" id="FN543502">
    <property type="protein sequence ID" value="CBG90344.1"/>
    <property type="molecule type" value="Genomic_DNA"/>
</dbReference>
<dbReference type="RefSeq" id="WP_012907668.1">
    <property type="nucleotide sequence ID" value="NC_013716.1"/>
</dbReference>
<dbReference type="SMR" id="D2TRT2"/>
<dbReference type="STRING" id="637910.ROD_36361"/>
<dbReference type="KEGG" id="cro:ROD_36361"/>
<dbReference type="eggNOG" id="COG3700">
    <property type="taxonomic scope" value="Bacteria"/>
</dbReference>
<dbReference type="HOGENOM" id="CLU_081496_0_0_6"/>
<dbReference type="OrthoDB" id="2234478at2"/>
<dbReference type="Proteomes" id="UP000001889">
    <property type="component" value="Chromosome"/>
</dbReference>
<dbReference type="GO" id="GO:0030288">
    <property type="term" value="C:outer membrane-bounded periplasmic space"/>
    <property type="evidence" value="ECO:0007669"/>
    <property type="project" value="InterPro"/>
</dbReference>
<dbReference type="GO" id="GO:0003993">
    <property type="term" value="F:acid phosphatase activity"/>
    <property type="evidence" value="ECO:0007669"/>
    <property type="project" value="UniProtKB-EC"/>
</dbReference>
<dbReference type="GO" id="GO:0046872">
    <property type="term" value="F:metal ion binding"/>
    <property type="evidence" value="ECO:0007669"/>
    <property type="project" value="UniProtKB-KW"/>
</dbReference>
<dbReference type="CDD" id="cd07499">
    <property type="entry name" value="HAD_CBAP"/>
    <property type="match status" value="1"/>
</dbReference>
<dbReference type="Gene3D" id="3.40.50.1000">
    <property type="entry name" value="HAD superfamily/HAD-like"/>
    <property type="match status" value="1"/>
</dbReference>
<dbReference type="InterPro" id="IPR005519">
    <property type="entry name" value="Acid_phosphat_B-like"/>
</dbReference>
<dbReference type="InterPro" id="IPR036412">
    <property type="entry name" value="HAD-like_sf"/>
</dbReference>
<dbReference type="InterPro" id="IPR010025">
    <property type="entry name" value="HAD-SF_ppase_IIIB_AphA"/>
</dbReference>
<dbReference type="InterPro" id="IPR023214">
    <property type="entry name" value="HAD_sf"/>
</dbReference>
<dbReference type="NCBIfam" id="TIGR01672">
    <property type="entry name" value="AphA"/>
    <property type="match status" value="1"/>
</dbReference>
<dbReference type="Pfam" id="PF03767">
    <property type="entry name" value="Acid_phosphat_B"/>
    <property type="match status" value="1"/>
</dbReference>
<dbReference type="PIRSF" id="PIRSF017818">
    <property type="entry name" value="Acid_Ptase_B"/>
    <property type="match status" value="1"/>
</dbReference>
<dbReference type="SFLD" id="SFLDG01127">
    <property type="entry name" value="C1.3:_Acid_Phosphatase_Like"/>
    <property type="match status" value="1"/>
</dbReference>
<dbReference type="SFLD" id="SFLDS00003">
    <property type="entry name" value="Haloacid_Dehalogenase"/>
    <property type="match status" value="1"/>
</dbReference>
<dbReference type="SUPFAM" id="SSF56784">
    <property type="entry name" value="HAD-like"/>
    <property type="match status" value="1"/>
</dbReference>
<accession>D2TRT2</accession>
<gene>
    <name evidence="1 4" type="primary">aphA</name>
    <name type="ordered locus">ROD_36361</name>
</gene>
<evidence type="ECO:0000250" key="1">
    <source>
        <dbReference type="UniProtKB" id="P0AE22"/>
    </source>
</evidence>
<evidence type="ECO:0000255" key="2"/>
<evidence type="ECO:0000269" key="3">
    <source>
    </source>
</evidence>
<evidence type="ECO:0000312" key="4">
    <source>
        <dbReference type="EMBL" id="CBG90344.1"/>
    </source>
</evidence>